<organism>
    <name type="scientific">Saccharum hybrid</name>
    <name type="common">Sugarcane</name>
    <dbReference type="NCBI Taxonomy" id="15819"/>
    <lineage>
        <taxon>Eukaryota</taxon>
        <taxon>Viridiplantae</taxon>
        <taxon>Streptophyta</taxon>
        <taxon>Embryophyta</taxon>
        <taxon>Tracheophyta</taxon>
        <taxon>Spermatophyta</taxon>
        <taxon>Magnoliopsida</taxon>
        <taxon>Liliopsida</taxon>
        <taxon>Poales</taxon>
        <taxon>Poaceae</taxon>
        <taxon>PACMAD clade</taxon>
        <taxon>Panicoideae</taxon>
        <taxon>Andropogonodae</taxon>
        <taxon>Andropogoneae</taxon>
        <taxon>Saccharinae</taxon>
        <taxon>Saccharum</taxon>
    </lineage>
</organism>
<reference key="1">
    <citation type="journal article" date="2004" name="Curr. Genet.">
        <title>Structural features and transcript-editing analysis of sugarcane (Saccharum officinarum L.) chloroplast genome.</title>
        <authorList>
            <person name="Calsa T. Jr."/>
            <person name="Carraro D.M."/>
            <person name="Benatti M.R."/>
            <person name="Barbosa A.C."/>
            <person name="Kitajima J.P."/>
            <person name="Carrer H."/>
        </authorList>
    </citation>
    <scope>NUCLEOTIDE SEQUENCE [LARGE SCALE GENOMIC DNA]</scope>
    <source>
        <strain>cv. SP-80-3280</strain>
    </source>
</reference>
<comment type="function">
    <text evidence="1">One of the components of the core complex of photosystem II (PSII). PSII is a light-driven water:plastoquinone oxidoreductase that uses light energy to abstract electrons from H(2)O, generating O(2) and a proton gradient subsequently used for ATP formation. It consists of a core antenna complex that captures photons, and an electron transfer chain that converts photonic excitation into a charge separation. This subunit is found at the monomer-monomer interface and is required for correct PSII assembly and/or dimerization.</text>
</comment>
<comment type="subunit">
    <text evidence="1">PSII is composed of 1 copy each of membrane proteins PsbA, PsbB, PsbC, PsbD, PsbE, PsbF, PsbH, PsbI, PsbJ, PsbK, PsbL, PsbM, PsbT, PsbX, PsbY, PsbZ, Psb30/Ycf12, at least 3 peripheral proteins of the oxygen-evolving complex and a large number of cofactors. It forms dimeric complexes.</text>
</comment>
<comment type="subcellular location">
    <subcellularLocation>
        <location evidence="1">Plastid</location>
        <location evidence="1">Chloroplast thylakoid membrane</location>
        <topology evidence="1">Single-pass membrane protein</topology>
    </subcellularLocation>
</comment>
<comment type="similarity">
    <text evidence="1">Belongs to the PsbL family.</text>
</comment>
<sequence>MTQSNPNEQNVELNRTSLYWGLLLIFVLAVLFSNYFFN</sequence>
<accession>Q6L385</accession>
<gene>
    <name evidence="1" type="primary">psbL</name>
    <name type="ordered locus">PS138</name>
</gene>
<feature type="chain" id="PRO_0000219764" description="Photosystem II reaction center protein L">
    <location>
        <begin position="1"/>
        <end position="38"/>
    </location>
</feature>
<feature type="transmembrane region" description="Helical" evidence="1">
    <location>
        <begin position="17"/>
        <end position="37"/>
    </location>
</feature>
<proteinExistence type="inferred from homology"/>
<keyword id="KW-0150">Chloroplast</keyword>
<keyword id="KW-0472">Membrane</keyword>
<keyword id="KW-0602">Photosynthesis</keyword>
<keyword id="KW-0604">Photosystem II</keyword>
<keyword id="KW-0934">Plastid</keyword>
<keyword id="KW-0674">Reaction center</keyword>
<keyword id="KW-0793">Thylakoid</keyword>
<keyword id="KW-0812">Transmembrane</keyword>
<keyword id="KW-1133">Transmembrane helix</keyword>
<protein>
    <recommendedName>
        <fullName evidence="1">Photosystem II reaction center protein L</fullName>
        <shortName evidence="1">PSII-L</shortName>
    </recommendedName>
</protein>
<name>PSBL_SACHY</name>
<geneLocation type="chloroplast"/>
<evidence type="ECO:0000255" key="1">
    <source>
        <dbReference type="HAMAP-Rule" id="MF_01317"/>
    </source>
</evidence>
<dbReference type="EMBL" id="AE009947">
    <property type="protein sequence ID" value="AAT44707.1"/>
    <property type="molecule type" value="Genomic_DNA"/>
</dbReference>
<dbReference type="SMR" id="Q6L385"/>
<dbReference type="GO" id="GO:0009535">
    <property type="term" value="C:chloroplast thylakoid membrane"/>
    <property type="evidence" value="ECO:0007669"/>
    <property type="project" value="UniProtKB-SubCell"/>
</dbReference>
<dbReference type="GO" id="GO:0009539">
    <property type="term" value="C:photosystem II reaction center"/>
    <property type="evidence" value="ECO:0007669"/>
    <property type="project" value="InterPro"/>
</dbReference>
<dbReference type="GO" id="GO:0015979">
    <property type="term" value="P:photosynthesis"/>
    <property type="evidence" value="ECO:0007669"/>
    <property type="project" value="UniProtKB-UniRule"/>
</dbReference>
<dbReference type="HAMAP" id="MF_01317">
    <property type="entry name" value="PSII_PsbL"/>
    <property type="match status" value="1"/>
</dbReference>
<dbReference type="InterPro" id="IPR003372">
    <property type="entry name" value="PSII_PsbL"/>
</dbReference>
<dbReference type="InterPro" id="IPR037266">
    <property type="entry name" value="PSII_PsbL_sf"/>
</dbReference>
<dbReference type="NCBIfam" id="NF001972">
    <property type="entry name" value="PRK00753.1"/>
    <property type="match status" value="1"/>
</dbReference>
<dbReference type="Pfam" id="PF02419">
    <property type="entry name" value="PsbL"/>
    <property type="match status" value="1"/>
</dbReference>
<dbReference type="SUPFAM" id="SSF161017">
    <property type="entry name" value="Photosystem II reaction center protein L, PsbL"/>
    <property type="match status" value="1"/>
</dbReference>